<accession>Q2JMX9</accession>
<dbReference type="EMBL" id="CP000240">
    <property type="protein sequence ID" value="ABD01898.1"/>
    <property type="molecule type" value="Genomic_DNA"/>
</dbReference>
<dbReference type="RefSeq" id="WP_011432554.1">
    <property type="nucleotide sequence ID" value="NC_007776.1"/>
</dbReference>
<dbReference type="SMR" id="Q2JMX9"/>
<dbReference type="STRING" id="321332.CYB_0919"/>
<dbReference type="KEGG" id="cyb:CYB_0919"/>
<dbReference type="eggNOG" id="COG0049">
    <property type="taxonomic scope" value="Bacteria"/>
</dbReference>
<dbReference type="HOGENOM" id="CLU_072226_1_1_3"/>
<dbReference type="OrthoDB" id="9807653at2"/>
<dbReference type="Proteomes" id="UP000001938">
    <property type="component" value="Chromosome"/>
</dbReference>
<dbReference type="GO" id="GO:0015935">
    <property type="term" value="C:small ribosomal subunit"/>
    <property type="evidence" value="ECO:0007669"/>
    <property type="project" value="InterPro"/>
</dbReference>
<dbReference type="GO" id="GO:0019843">
    <property type="term" value="F:rRNA binding"/>
    <property type="evidence" value="ECO:0007669"/>
    <property type="project" value="UniProtKB-UniRule"/>
</dbReference>
<dbReference type="GO" id="GO:0003735">
    <property type="term" value="F:structural constituent of ribosome"/>
    <property type="evidence" value="ECO:0007669"/>
    <property type="project" value="InterPro"/>
</dbReference>
<dbReference type="GO" id="GO:0000049">
    <property type="term" value="F:tRNA binding"/>
    <property type="evidence" value="ECO:0007669"/>
    <property type="project" value="UniProtKB-UniRule"/>
</dbReference>
<dbReference type="GO" id="GO:0006412">
    <property type="term" value="P:translation"/>
    <property type="evidence" value="ECO:0007669"/>
    <property type="project" value="UniProtKB-UniRule"/>
</dbReference>
<dbReference type="CDD" id="cd14869">
    <property type="entry name" value="uS7_Bacteria"/>
    <property type="match status" value="1"/>
</dbReference>
<dbReference type="FunFam" id="1.10.455.10:FF:000001">
    <property type="entry name" value="30S ribosomal protein S7"/>
    <property type="match status" value="1"/>
</dbReference>
<dbReference type="Gene3D" id="1.10.455.10">
    <property type="entry name" value="Ribosomal protein S7 domain"/>
    <property type="match status" value="1"/>
</dbReference>
<dbReference type="HAMAP" id="MF_00480_B">
    <property type="entry name" value="Ribosomal_uS7_B"/>
    <property type="match status" value="1"/>
</dbReference>
<dbReference type="InterPro" id="IPR000235">
    <property type="entry name" value="Ribosomal_uS7"/>
</dbReference>
<dbReference type="InterPro" id="IPR005717">
    <property type="entry name" value="Ribosomal_uS7_bac/org-type"/>
</dbReference>
<dbReference type="InterPro" id="IPR023798">
    <property type="entry name" value="Ribosomal_uS7_dom"/>
</dbReference>
<dbReference type="InterPro" id="IPR036823">
    <property type="entry name" value="Ribosomal_uS7_dom_sf"/>
</dbReference>
<dbReference type="NCBIfam" id="TIGR01029">
    <property type="entry name" value="rpsG_bact"/>
    <property type="match status" value="1"/>
</dbReference>
<dbReference type="PANTHER" id="PTHR11205">
    <property type="entry name" value="RIBOSOMAL PROTEIN S7"/>
    <property type="match status" value="1"/>
</dbReference>
<dbReference type="Pfam" id="PF00177">
    <property type="entry name" value="Ribosomal_S7"/>
    <property type="match status" value="1"/>
</dbReference>
<dbReference type="PIRSF" id="PIRSF002122">
    <property type="entry name" value="RPS7p_RPS7a_RPS5e_RPS7o"/>
    <property type="match status" value="1"/>
</dbReference>
<dbReference type="SUPFAM" id="SSF47973">
    <property type="entry name" value="Ribosomal protein S7"/>
    <property type="match status" value="1"/>
</dbReference>
<comment type="function">
    <text evidence="1">One of the primary rRNA binding proteins, it binds directly to 16S rRNA where it nucleates assembly of the head domain of the 30S subunit. Is located at the subunit interface close to the decoding center, probably blocks exit of the E-site tRNA.</text>
</comment>
<comment type="subunit">
    <text evidence="1">Part of the 30S ribosomal subunit. Contacts proteins S9 and S11.</text>
</comment>
<comment type="similarity">
    <text evidence="1">Belongs to the universal ribosomal protein uS7 family.</text>
</comment>
<reference key="1">
    <citation type="journal article" date="2007" name="ISME J.">
        <title>Population level functional diversity in a microbial community revealed by comparative genomic and metagenomic analyses.</title>
        <authorList>
            <person name="Bhaya D."/>
            <person name="Grossman A.R."/>
            <person name="Steunou A.-S."/>
            <person name="Khuri N."/>
            <person name="Cohan F.M."/>
            <person name="Hamamura N."/>
            <person name="Melendrez M.C."/>
            <person name="Bateson M.M."/>
            <person name="Ward D.M."/>
            <person name="Heidelberg J.F."/>
        </authorList>
    </citation>
    <scope>NUCLEOTIDE SEQUENCE [LARGE SCALE GENOMIC DNA]</scope>
    <source>
        <strain>JA-2-3B'a(2-13)</strain>
    </source>
</reference>
<protein>
    <recommendedName>
        <fullName evidence="1">Small ribosomal subunit protein uS7</fullName>
    </recommendedName>
    <alternativeName>
        <fullName evidence="2">30S ribosomal protein S7</fullName>
    </alternativeName>
</protein>
<proteinExistence type="inferred from homology"/>
<keyword id="KW-1185">Reference proteome</keyword>
<keyword id="KW-0687">Ribonucleoprotein</keyword>
<keyword id="KW-0689">Ribosomal protein</keyword>
<keyword id="KW-0694">RNA-binding</keyword>
<keyword id="KW-0699">rRNA-binding</keyword>
<keyword id="KW-0820">tRNA-binding</keyword>
<organism>
    <name type="scientific">Synechococcus sp. (strain JA-2-3B'a(2-13))</name>
    <name type="common">Cyanobacteria bacterium Yellowstone B-Prime</name>
    <dbReference type="NCBI Taxonomy" id="321332"/>
    <lineage>
        <taxon>Bacteria</taxon>
        <taxon>Bacillati</taxon>
        <taxon>Cyanobacteriota</taxon>
        <taxon>Cyanophyceae</taxon>
        <taxon>Synechococcales</taxon>
        <taxon>Synechococcaceae</taxon>
        <taxon>Synechococcus</taxon>
    </lineage>
</organism>
<gene>
    <name evidence="1" type="primary">rpsG</name>
    <name evidence="1" type="synonym">rps7</name>
    <name type="ordered locus">CYB_0919</name>
</gene>
<sequence>MSRRNRAPRRDVPPDPKYGSRLVTMLIRKLMMRGKASLAARILYEALDIVRERTGQDPLPLLENAVRNATPLVEVKARRVGGATYQVPVEVRGERGTSLALRWLVTFSRTRPGRTMAAKLANELIDAANETGSAIRRREEVHRMAEANKAFAHYRY</sequence>
<feature type="chain" id="PRO_0000241781" description="Small ribosomal subunit protein uS7">
    <location>
        <begin position="1"/>
        <end position="156"/>
    </location>
</feature>
<evidence type="ECO:0000255" key="1">
    <source>
        <dbReference type="HAMAP-Rule" id="MF_00480"/>
    </source>
</evidence>
<evidence type="ECO:0000305" key="2"/>
<name>RS7_SYNJB</name>